<proteinExistence type="inferred from homology"/>
<reference key="1">
    <citation type="journal article" date="2009" name="J. Bacteriol.">
        <title>Complete genome sequence and comparative genome analysis of enteropathogenic Escherichia coli O127:H6 strain E2348/69.</title>
        <authorList>
            <person name="Iguchi A."/>
            <person name="Thomson N.R."/>
            <person name="Ogura Y."/>
            <person name="Saunders D."/>
            <person name="Ooka T."/>
            <person name="Henderson I.R."/>
            <person name="Harris D."/>
            <person name="Asadulghani M."/>
            <person name="Kurokawa K."/>
            <person name="Dean P."/>
            <person name="Kenny B."/>
            <person name="Quail M.A."/>
            <person name="Thurston S."/>
            <person name="Dougan G."/>
            <person name="Hayashi T."/>
            <person name="Parkhill J."/>
            <person name="Frankel G."/>
        </authorList>
    </citation>
    <scope>NUCLEOTIDE SEQUENCE [LARGE SCALE GENOMIC DNA]</scope>
    <source>
        <strain>E2348/69 / EPEC</strain>
    </source>
</reference>
<name>ILVC_ECO27</name>
<dbReference type="EC" id="1.1.1.86" evidence="1"/>
<dbReference type="EMBL" id="FM180568">
    <property type="protein sequence ID" value="CAS11624.1"/>
    <property type="molecule type" value="Genomic_DNA"/>
</dbReference>
<dbReference type="RefSeq" id="WP_001296589.1">
    <property type="nucleotide sequence ID" value="NC_011601.1"/>
</dbReference>
<dbReference type="SMR" id="B7UMN1"/>
<dbReference type="KEGG" id="ecg:E2348C_4076"/>
<dbReference type="HOGENOM" id="CLU_551905_0_0_6"/>
<dbReference type="UniPathway" id="UPA00047">
    <property type="reaction ID" value="UER00056"/>
</dbReference>
<dbReference type="UniPathway" id="UPA00049">
    <property type="reaction ID" value="UER00060"/>
</dbReference>
<dbReference type="Proteomes" id="UP000008205">
    <property type="component" value="Chromosome"/>
</dbReference>
<dbReference type="GO" id="GO:0005829">
    <property type="term" value="C:cytosol"/>
    <property type="evidence" value="ECO:0007669"/>
    <property type="project" value="TreeGrafter"/>
</dbReference>
<dbReference type="GO" id="GO:0004455">
    <property type="term" value="F:ketol-acid reductoisomerase activity"/>
    <property type="evidence" value="ECO:0007669"/>
    <property type="project" value="UniProtKB-UniRule"/>
</dbReference>
<dbReference type="GO" id="GO:0000287">
    <property type="term" value="F:magnesium ion binding"/>
    <property type="evidence" value="ECO:0007669"/>
    <property type="project" value="UniProtKB-UniRule"/>
</dbReference>
<dbReference type="GO" id="GO:0009097">
    <property type="term" value="P:isoleucine biosynthetic process"/>
    <property type="evidence" value="ECO:0007669"/>
    <property type="project" value="UniProtKB-UniRule"/>
</dbReference>
<dbReference type="GO" id="GO:0009099">
    <property type="term" value="P:L-valine biosynthetic process"/>
    <property type="evidence" value="ECO:0007669"/>
    <property type="project" value="UniProtKB-UniRule"/>
</dbReference>
<dbReference type="FunFam" id="1.10.1040.10:FF:000007">
    <property type="entry name" value="Ketol-acid reductoisomerase (NADP(+))"/>
    <property type="match status" value="1"/>
</dbReference>
<dbReference type="FunFam" id="3.40.50.720:FF:000043">
    <property type="entry name" value="Ketol-acid reductoisomerase (NADP(+))"/>
    <property type="match status" value="1"/>
</dbReference>
<dbReference type="Gene3D" id="1.10.1040.10">
    <property type="entry name" value="N-(1-d-carboxylethyl)-l-norvaline Dehydrogenase, domain 2"/>
    <property type="match status" value="1"/>
</dbReference>
<dbReference type="Gene3D" id="3.40.50.720">
    <property type="entry name" value="NAD(P)-binding Rossmann-like Domain"/>
    <property type="match status" value="1"/>
</dbReference>
<dbReference type="HAMAP" id="MF_00435">
    <property type="entry name" value="IlvC"/>
    <property type="match status" value="1"/>
</dbReference>
<dbReference type="InterPro" id="IPR008927">
    <property type="entry name" value="6-PGluconate_DH-like_C_sf"/>
</dbReference>
<dbReference type="InterPro" id="IPR013328">
    <property type="entry name" value="6PGD_dom2"/>
</dbReference>
<dbReference type="InterPro" id="IPR013023">
    <property type="entry name" value="KARI"/>
</dbReference>
<dbReference type="InterPro" id="IPR000506">
    <property type="entry name" value="KARI_C"/>
</dbReference>
<dbReference type="InterPro" id="IPR013116">
    <property type="entry name" value="KARI_N"/>
</dbReference>
<dbReference type="InterPro" id="IPR036291">
    <property type="entry name" value="NAD(P)-bd_dom_sf"/>
</dbReference>
<dbReference type="NCBIfam" id="TIGR00465">
    <property type="entry name" value="ilvC"/>
    <property type="match status" value="1"/>
</dbReference>
<dbReference type="NCBIfam" id="NF003557">
    <property type="entry name" value="PRK05225.1"/>
    <property type="match status" value="1"/>
</dbReference>
<dbReference type="PANTHER" id="PTHR21371">
    <property type="entry name" value="KETOL-ACID REDUCTOISOMERASE, MITOCHONDRIAL"/>
    <property type="match status" value="1"/>
</dbReference>
<dbReference type="PANTHER" id="PTHR21371:SF1">
    <property type="entry name" value="KETOL-ACID REDUCTOISOMERASE, MITOCHONDRIAL"/>
    <property type="match status" value="1"/>
</dbReference>
<dbReference type="Pfam" id="PF01450">
    <property type="entry name" value="KARI_C"/>
    <property type="match status" value="2"/>
</dbReference>
<dbReference type="Pfam" id="PF07991">
    <property type="entry name" value="KARI_N"/>
    <property type="match status" value="1"/>
</dbReference>
<dbReference type="SUPFAM" id="SSF48179">
    <property type="entry name" value="6-phosphogluconate dehydrogenase C-terminal domain-like"/>
    <property type="match status" value="2"/>
</dbReference>
<dbReference type="SUPFAM" id="SSF51735">
    <property type="entry name" value="NAD(P)-binding Rossmann-fold domains"/>
    <property type="match status" value="1"/>
</dbReference>
<dbReference type="PROSITE" id="PS51851">
    <property type="entry name" value="KARI_C"/>
    <property type="match status" value="2"/>
</dbReference>
<dbReference type="PROSITE" id="PS51850">
    <property type="entry name" value="KARI_N"/>
    <property type="match status" value="1"/>
</dbReference>
<comment type="function">
    <text evidence="1">Involved in the biosynthesis of branched-chain amino acids (BCAA). Catalyzes an alkyl-migration followed by a ketol-acid reduction of (S)-2-acetolactate (S2AL) to yield (R)-2,3-dihydroxy-isovalerate. In the isomerase reaction, S2AL is rearranged via a Mg-dependent methyl migration to produce 3-hydroxy-3-methyl-2-ketobutyrate (HMKB). In the reductase reaction, this 2-ketoacid undergoes a metal-dependent reduction by NADPH to yield (R)-2,3-dihydroxy-isovalerate.</text>
</comment>
<comment type="catalytic activity">
    <reaction evidence="1">
        <text>(2R)-2,3-dihydroxy-3-methylbutanoate + NADP(+) = (2S)-2-acetolactate + NADPH + H(+)</text>
        <dbReference type="Rhea" id="RHEA:22068"/>
        <dbReference type="ChEBI" id="CHEBI:15378"/>
        <dbReference type="ChEBI" id="CHEBI:49072"/>
        <dbReference type="ChEBI" id="CHEBI:57783"/>
        <dbReference type="ChEBI" id="CHEBI:58349"/>
        <dbReference type="ChEBI" id="CHEBI:58476"/>
        <dbReference type="EC" id="1.1.1.86"/>
    </reaction>
</comment>
<comment type="catalytic activity">
    <reaction evidence="1">
        <text>(2R,3R)-2,3-dihydroxy-3-methylpentanoate + NADP(+) = (S)-2-ethyl-2-hydroxy-3-oxobutanoate + NADPH + H(+)</text>
        <dbReference type="Rhea" id="RHEA:13493"/>
        <dbReference type="ChEBI" id="CHEBI:15378"/>
        <dbReference type="ChEBI" id="CHEBI:49256"/>
        <dbReference type="ChEBI" id="CHEBI:49258"/>
        <dbReference type="ChEBI" id="CHEBI:57783"/>
        <dbReference type="ChEBI" id="CHEBI:58349"/>
        <dbReference type="EC" id="1.1.1.86"/>
    </reaction>
</comment>
<comment type="cofactor">
    <cofactor evidence="1">
        <name>Mg(2+)</name>
        <dbReference type="ChEBI" id="CHEBI:18420"/>
    </cofactor>
    <text evidence="1">Binds 2 magnesium ions per subunit.</text>
</comment>
<comment type="pathway">
    <text evidence="1">Amino-acid biosynthesis; L-isoleucine biosynthesis; L-isoleucine from 2-oxobutanoate: step 2/4.</text>
</comment>
<comment type="pathway">
    <text evidence="1">Amino-acid biosynthesis; L-valine biosynthesis; L-valine from pyruvate: step 2/4.</text>
</comment>
<comment type="similarity">
    <text evidence="1">Belongs to the ketol-acid reductoisomerase family.</text>
</comment>
<gene>
    <name evidence="1" type="primary">ilvC</name>
    <name type="ordered locus">E2348C_4076</name>
</gene>
<accession>B7UMN1</accession>
<keyword id="KW-0028">Amino-acid biosynthesis</keyword>
<keyword id="KW-0100">Branched-chain amino acid biosynthesis</keyword>
<keyword id="KW-0460">Magnesium</keyword>
<keyword id="KW-0479">Metal-binding</keyword>
<keyword id="KW-0521">NADP</keyword>
<keyword id="KW-0560">Oxidoreductase</keyword>
<keyword id="KW-1185">Reference proteome</keyword>
<keyword id="KW-0677">Repeat</keyword>
<organism>
    <name type="scientific">Escherichia coli O127:H6 (strain E2348/69 / EPEC)</name>
    <dbReference type="NCBI Taxonomy" id="574521"/>
    <lineage>
        <taxon>Bacteria</taxon>
        <taxon>Pseudomonadati</taxon>
        <taxon>Pseudomonadota</taxon>
        <taxon>Gammaproteobacteria</taxon>
        <taxon>Enterobacterales</taxon>
        <taxon>Enterobacteriaceae</taxon>
        <taxon>Escherichia</taxon>
    </lineage>
</organism>
<sequence>MANYFNTLNLRQQLAQLGKCRFMGRDEFADGASYLQGKKVVIVGCGAQGLNQGLNMRDSGLDISYALRKEAIAEKRASWRKATENGFKVGTYEELIPQADLVVNLTPDKQHSDVVRSVQPLMKDGAALGYSHGFNIVEVGEQIRKDITVVMVAPKCPGTEVREEYKRGFGVPTLIAVHPENDPKGEGMAIAKAWAAATGGHRAGVLESSFVAEVKSDLMGEQTILCGMLQAGSLLCFDKLVEEGTDPAYAEKLIQFGWETITEALKQGGITLMMDRLSNPAKLRAYALSEQLKEIMAPLFQKHMDDIISGEFSSGMMADWANDDKKLLTWREETGKTAFETAPQYEGKIGEQEYFDKGVLMIAMVKAGVELAFETMVDSGIIEESAYYESLHELPLIANTIARKRLYEMNVVISDTAEYGNYLFSYACVPLLKPFMAELQPGDLGKAIPEGAVDNAQLRDVNEAIRSHAIEQVGKKLRGYMTDMKRIAVAG</sequence>
<feature type="chain" id="PRO_1000190957" description="Ketol-acid reductoisomerase (NADP(+))">
    <location>
        <begin position="1"/>
        <end position="491"/>
    </location>
</feature>
<feature type="domain" description="KARI N-terminal Rossmann" evidence="2">
    <location>
        <begin position="15"/>
        <end position="208"/>
    </location>
</feature>
<feature type="domain" description="KARI C-terminal knotted 1" evidence="3">
    <location>
        <begin position="209"/>
        <end position="344"/>
    </location>
</feature>
<feature type="domain" description="KARI C-terminal knotted 2" evidence="3">
    <location>
        <begin position="345"/>
        <end position="484"/>
    </location>
</feature>
<feature type="active site" evidence="1">
    <location>
        <position position="132"/>
    </location>
</feature>
<feature type="binding site" evidence="1">
    <location>
        <begin position="45"/>
        <end position="48"/>
    </location>
    <ligand>
        <name>NADP(+)</name>
        <dbReference type="ChEBI" id="CHEBI:58349"/>
    </ligand>
</feature>
<feature type="binding site" evidence="1">
    <location>
        <position position="68"/>
    </location>
    <ligand>
        <name>NADP(+)</name>
        <dbReference type="ChEBI" id="CHEBI:58349"/>
    </ligand>
</feature>
<feature type="binding site" evidence="1">
    <location>
        <position position="76"/>
    </location>
    <ligand>
        <name>NADP(+)</name>
        <dbReference type="ChEBI" id="CHEBI:58349"/>
    </ligand>
</feature>
<feature type="binding site" evidence="1">
    <location>
        <position position="78"/>
    </location>
    <ligand>
        <name>NADP(+)</name>
        <dbReference type="ChEBI" id="CHEBI:58349"/>
    </ligand>
</feature>
<feature type="binding site" evidence="1">
    <location>
        <begin position="108"/>
        <end position="110"/>
    </location>
    <ligand>
        <name>NADP(+)</name>
        <dbReference type="ChEBI" id="CHEBI:58349"/>
    </ligand>
</feature>
<feature type="binding site" evidence="1">
    <location>
        <position position="158"/>
    </location>
    <ligand>
        <name>NADP(+)</name>
        <dbReference type="ChEBI" id="CHEBI:58349"/>
    </ligand>
</feature>
<feature type="binding site" evidence="1">
    <location>
        <position position="217"/>
    </location>
    <ligand>
        <name>Mg(2+)</name>
        <dbReference type="ChEBI" id="CHEBI:18420"/>
        <label>1</label>
    </ligand>
</feature>
<feature type="binding site" evidence="1">
    <location>
        <position position="217"/>
    </location>
    <ligand>
        <name>Mg(2+)</name>
        <dbReference type="ChEBI" id="CHEBI:18420"/>
        <label>2</label>
    </ligand>
</feature>
<feature type="binding site" evidence="1">
    <location>
        <position position="221"/>
    </location>
    <ligand>
        <name>Mg(2+)</name>
        <dbReference type="ChEBI" id="CHEBI:18420"/>
        <label>1</label>
    </ligand>
</feature>
<feature type="binding site" evidence="1">
    <location>
        <position position="389"/>
    </location>
    <ligand>
        <name>Mg(2+)</name>
        <dbReference type="ChEBI" id="CHEBI:18420"/>
        <label>2</label>
    </ligand>
</feature>
<feature type="binding site" evidence="1">
    <location>
        <position position="393"/>
    </location>
    <ligand>
        <name>Mg(2+)</name>
        <dbReference type="ChEBI" id="CHEBI:18420"/>
        <label>2</label>
    </ligand>
</feature>
<feature type="binding site" evidence="1">
    <location>
        <position position="414"/>
    </location>
    <ligand>
        <name>substrate</name>
    </ligand>
</feature>
<protein>
    <recommendedName>
        <fullName evidence="1">Ketol-acid reductoisomerase (NADP(+))</fullName>
        <shortName evidence="1">KARI</shortName>
        <ecNumber evidence="1">1.1.1.86</ecNumber>
    </recommendedName>
    <alternativeName>
        <fullName evidence="1">Acetohydroxy-acid isomeroreductase</fullName>
        <shortName evidence="1">AHIR</shortName>
    </alternativeName>
    <alternativeName>
        <fullName evidence="1">Alpha-keto-beta-hydroxylacyl reductoisomerase</fullName>
    </alternativeName>
    <alternativeName>
        <fullName evidence="1">Ketol-acid reductoisomerase type 2</fullName>
    </alternativeName>
    <alternativeName>
        <fullName evidence="1">Ketol-acid reductoisomerase type II</fullName>
    </alternativeName>
</protein>
<evidence type="ECO:0000255" key="1">
    <source>
        <dbReference type="HAMAP-Rule" id="MF_00435"/>
    </source>
</evidence>
<evidence type="ECO:0000255" key="2">
    <source>
        <dbReference type="PROSITE-ProRule" id="PRU01197"/>
    </source>
</evidence>
<evidence type="ECO:0000255" key="3">
    <source>
        <dbReference type="PROSITE-ProRule" id="PRU01198"/>
    </source>
</evidence>